<reference key="1">
    <citation type="journal article" date="2006" name="Mol. Microbiol.">
        <title>Role of pathogenicity island-associated integrases in the genome plasticity of uropathogenic Escherichia coli strain 536.</title>
        <authorList>
            <person name="Hochhut B."/>
            <person name="Wilde C."/>
            <person name="Balling G."/>
            <person name="Middendorf B."/>
            <person name="Dobrindt U."/>
            <person name="Brzuszkiewicz E."/>
            <person name="Gottschalk G."/>
            <person name="Carniel E."/>
            <person name="Hacker J."/>
        </authorList>
    </citation>
    <scope>NUCLEOTIDE SEQUENCE [LARGE SCALE GENOMIC DNA]</scope>
    <source>
        <strain>536 / UPEC</strain>
    </source>
</reference>
<proteinExistence type="inferred from homology"/>
<gene>
    <name evidence="1" type="primary">glgS</name>
    <name type="ordered locus">ECP_3138</name>
</gene>
<feature type="chain" id="PRO_0000264145" description="Surface composition regulator">
    <location>
        <begin position="1"/>
        <end position="66"/>
    </location>
</feature>
<comment type="function">
    <text evidence="1">Major determinant of cell surface composition. Negatively regulates motility, adhesion and synthesis of biofilm exopolysaccharides.</text>
</comment>
<comment type="similarity">
    <text evidence="1">Belongs to the GlgS family.</text>
</comment>
<name>GLGS_ECOL5</name>
<organism>
    <name type="scientific">Escherichia coli O6:K15:H31 (strain 536 / UPEC)</name>
    <dbReference type="NCBI Taxonomy" id="362663"/>
    <lineage>
        <taxon>Bacteria</taxon>
        <taxon>Pseudomonadati</taxon>
        <taxon>Pseudomonadota</taxon>
        <taxon>Gammaproteobacteria</taxon>
        <taxon>Enterobacterales</taxon>
        <taxon>Enterobacteriaceae</taxon>
        <taxon>Escherichia</taxon>
    </lineage>
</organism>
<sequence length="66" mass="7922">MDHSLNSLNNFDFLARSFARMHAEGRPVDILAVTGNMDEEHRTWFCARYAWYCQQMMQTRELELEH</sequence>
<dbReference type="EMBL" id="CP000247">
    <property type="protein sequence ID" value="ABG71121.1"/>
    <property type="molecule type" value="Genomic_DNA"/>
</dbReference>
<dbReference type="RefSeq" id="WP_001296424.1">
    <property type="nucleotide sequence ID" value="NC_008253.1"/>
</dbReference>
<dbReference type="SMR" id="Q0TD58"/>
<dbReference type="GeneID" id="75173169"/>
<dbReference type="KEGG" id="ecp:ECP_3138"/>
<dbReference type="HOGENOM" id="CLU_185971_0_0_6"/>
<dbReference type="Proteomes" id="UP000009182">
    <property type="component" value="Chromosome"/>
</dbReference>
<dbReference type="GO" id="GO:1902201">
    <property type="term" value="P:negative regulation of bacterial-type flagellum-dependent cell motility"/>
    <property type="evidence" value="ECO:0007669"/>
    <property type="project" value="UniProtKB-UniRule"/>
</dbReference>
<dbReference type="GO" id="GO:1900191">
    <property type="term" value="P:negative regulation of single-species biofilm formation"/>
    <property type="evidence" value="ECO:0007669"/>
    <property type="project" value="UniProtKB-UniRule"/>
</dbReference>
<dbReference type="FunFam" id="1.20.970.20:FF:000001">
    <property type="entry name" value="Surface composition regulator"/>
    <property type="match status" value="1"/>
</dbReference>
<dbReference type="Gene3D" id="1.20.970.20">
    <property type="entry name" value="Glycogen synthesis protein GlgS"/>
    <property type="match status" value="1"/>
</dbReference>
<dbReference type="HAMAP" id="MF_00525">
    <property type="entry name" value="GlgS"/>
    <property type="match status" value="1"/>
</dbReference>
<dbReference type="InterPro" id="IPR015065">
    <property type="entry name" value="GlgS"/>
</dbReference>
<dbReference type="InterPro" id="IPR036295">
    <property type="entry name" value="GlgS_sf"/>
</dbReference>
<dbReference type="NCBIfam" id="NF002793">
    <property type="entry name" value="PRK02922.1"/>
    <property type="match status" value="1"/>
</dbReference>
<dbReference type="Pfam" id="PF08971">
    <property type="entry name" value="GlgS"/>
    <property type="match status" value="1"/>
</dbReference>
<dbReference type="SUPFAM" id="SSF109747">
    <property type="entry name" value="Glycogen synthesis protein GlgS"/>
    <property type="match status" value="1"/>
</dbReference>
<accession>Q0TD58</accession>
<evidence type="ECO:0000255" key="1">
    <source>
        <dbReference type="HAMAP-Rule" id="MF_00525"/>
    </source>
</evidence>
<protein>
    <recommendedName>
        <fullName evidence="1">Surface composition regulator</fullName>
    </recommendedName>
</protein>